<reference key="1">
    <citation type="submission" date="2022-06" db="UniProtKB">
        <title>Isolation and identification of antioxidative peptides from crocodile meat hydrolysates using silica gel chromatography.</title>
        <authorList>
            <person name="Liu Y."/>
            <person name="Yan X."/>
            <person name="Rui C."/>
            <person name="He N."/>
            <person name="Hai-Hang L."/>
        </authorList>
    </citation>
    <scope>PROTEIN SEQUENCE</scope>
</reference>
<sequence length="26" mass="2967">SSLTIQFVEGQFVDSYDPTIENTFTK</sequence>
<proteinExistence type="evidence at protein level"/>
<evidence type="ECO:0000250" key="1">
    <source>
        <dbReference type="UniProtKB" id="Q15382"/>
    </source>
</evidence>
<evidence type="ECO:0000303" key="2">
    <source ref="1"/>
</evidence>
<evidence type="ECO:0000305" key="3"/>
<comment type="function">
    <text evidence="1">Binds GTP and exhibits intrinsic GTPase activity.</text>
</comment>
<comment type="catalytic activity">
    <reaction evidence="1">
        <text>GTP + H2O = GDP + phosphate + H(+)</text>
        <dbReference type="Rhea" id="RHEA:19669"/>
        <dbReference type="ChEBI" id="CHEBI:15377"/>
        <dbReference type="ChEBI" id="CHEBI:15378"/>
        <dbReference type="ChEBI" id="CHEBI:37565"/>
        <dbReference type="ChEBI" id="CHEBI:43474"/>
        <dbReference type="ChEBI" id="CHEBI:58189"/>
    </reaction>
    <physiologicalReaction direction="left-to-right" evidence="1">
        <dbReference type="Rhea" id="RHEA:19670"/>
    </physiologicalReaction>
</comment>
<comment type="similarity">
    <text evidence="3">Belongs to the small GTPase superfamily. Rheb family.</text>
</comment>
<protein>
    <recommendedName>
        <fullName evidence="3">GTP-binding protein Rheb</fullName>
        <ecNumber evidence="1">3.6.5.-</ecNumber>
    </recommendedName>
    <alternativeName>
        <fullName evidence="2">Peptide 1</fullName>
    </alternativeName>
    <alternativeName>
        <fullName>Ras homolog enriched in brain</fullName>
    </alternativeName>
</protein>
<dbReference type="EC" id="3.6.5.-" evidence="1"/>
<dbReference type="SMR" id="C0HM48"/>
<dbReference type="GO" id="GO:0005525">
    <property type="term" value="F:GTP binding"/>
    <property type="evidence" value="ECO:0007669"/>
    <property type="project" value="UniProtKB-KW"/>
</dbReference>
<dbReference type="GO" id="GO:0016787">
    <property type="term" value="F:hydrolase activity"/>
    <property type="evidence" value="ECO:0007669"/>
    <property type="project" value="UniProtKB-KW"/>
</dbReference>
<dbReference type="GO" id="GO:0046872">
    <property type="term" value="F:metal ion binding"/>
    <property type="evidence" value="ECO:0007669"/>
    <property type="project" value="UniProtKB-KW"/>
</dbReference>
<dbReference type="Gene3D" id="3.40.50.300">
    <property type="entry name" value="P-loop containing nucleotide triphosphate hydrolases"/>
    <property type="match status" value="1"/>
</dbReference>
<dbReference type="InterPro" id="IPR027417">
    <property type="entry name" value="P-loop_NTPase"/>
</dbReference>
<organism>
    <name type="scientific">Crocodylus siamensis</name>
    <name type="common">Siamese crocodile</name>
    <dbReference type="NCBI Taxonomy" id="68455"/>
    <lineage>
        <taxon>Eukaryota</taxon>
        <taxon>Metazoa</taxon>
        <taxon>Chordata</taxon>
        <taxon>Craniata</taxon>
        <taxon>Vertebrata</taxon>
        <taxon>Euteleostomi</taxon>
        <taxon>Archelosauria</taxon>
        <taxon>Archosauria</taxon>
        <taxon>Crocodylia</taxon>
        <taxon>Longirostres</taxon>
        <taxon>Crocodylidae</taxon>
        <taxon>Crocodylus</taxon>
    </lineage>
</organism>
<accession>C0HM48</accession>
<gene>
    <name evidence="1" type="primary">RHEB</name>
</gene>
<keyword id="KW-0903">Direct protein sequencing</keyword>
<keyword id="KW-0342">GTP-binding</keyword>
<keyword id="KW-0378">Hydrolase</keyword>
<keyword id="KW-0460">Magnesium</keyword>
<keyword id="KW-0479">Metal-binding</keyword>
<keyword id="KW-0547">Nucleotide-binding</keyword>
<name>RHEB_CROSI</name>
<feature type="chain" id="PRO_0000456653" description="GTP-binding protein Rheb">
    <location>
        <begin position="1" status="less than"/>
        <end position="26" status="greater than"/>
    </location>
</feature>
<feature type="short sequence motif" description="Effector region" evidence="1">
    <location>
        <begin position="16"/>
        <end position="24"/>
    </location>
</feature>
<feature type="binding site" evidence="1">
    <location>
        <position position="1"/>
    </location>
    <ligand>
        <name>GTP</name>
        <dbReference type="ChEBI" id="CHEBI:37565"/>
    </ligand>
</feature>
<feature type="binding site" evidence="1">
    <location>
        <position position="1"/>
    </location>
    <ligand>
        <name>Mg(2+)</name>
        <dbReference type="ChEBI" id="CHEBI:18420"/>
    </ligand>
</feature>
<feature type="binding site" evidence="1">
    <location>
        <position position="2"/>
    </location>
    <ligand>
        <name>GTP</name>
        <dbReference type="ChEBI" id="CHEBI:37565"/>
    </ligand>
</feature>
<feature type="binding site" evidence="1">
    <location>
        <position position="13"/>
    </location>
    <ligand>
        <name>GTP</name>
        <dbReference type="ChEBI" id="CHEBI:37565"/>
    </ligand>
</feature>
<feature type="binding site" evidence="1">
    <location>
        <position position="16"/>
    </location>
    <ligand>
        <name>GTP</name>
        <dbReference type="ChEBI" id="CHEBI:37565"/>
    </ligand>
</feature>
<feature type="binding site" evidence="1">
    <location>
        <position position="19"/>
    </location>
    <ligand>
        <name>GTP</name>
        <dbReference type="ChEBI" id="CHEBI:37565"/>
    </ligand>
</feature>
<feature type="binding site" evidence="1">
    <location>
        <position position="19"/>
    </location>
    <ligand>
        <name>Mg(2+)</name>
        <dbReference type="ChEBI" id="CHEBI:18420"/>
    </ligand>
</feature>
<feature type="non-terminal residue" evidence="2">
    <location>
        <position position="1"/>
    </location>
</feature>
<feature type="non-terminal residue" evidence="2">
    <location>
        <position position="26"/>
    </location>
</feature>